<sequence>MINTKIGRPCVRLHQLNFIRSITINQQPSSTISTEQLTKTTTIPSNIQQVEELTNSRTLEAPEFKTLGNSGSSTTSSSSSSILSINLPPSVPIYLKRGSLLSIYGIKQDITSINSVRSSLEFPLFWKKLIYGIDSNKGYQRLISTSPFSILVSSQSRRGGSIFSKNNGDKSFVNLILDGGTDWAILKNDSIQAYSGNSLNLNIYKLPNYISKKLSKKLGFGNKKFKTGLISWINRKIGYILISGRGNVGLIGNGNIYNLNLIKNEEILINKENLLGITVNGPYDLQNCIIKYQFPLKDQSIIDSNTSDVIIEKPKLYEPNSWGMIKYRFDQFNKSFKKIFQSIFKYSSDVKESGFNYLVGNQEFIKIIGPRNILIQSNVDNSFIIPSIKRSDKIVTPVKSNDNTEVKKSTTTGDYLNYVTIEPGKGAVFKSTPDFKDTVDQIDNKSK</sequence>
<name>AIM24_CANTT</name>
<evidence type="ECO:0000250" key="1"/>
<evidence type="ECO:0000255" key="2"/>
<evidence type="ECO:0000305" key="3"/>
<proteinExistence type="inferred from homology"/>
<reference key="1">
    <citation type="journal article" date="2009" name="Nature">
        <title>Evolution of pathogenicity and sexual reproduction in eight Candida genomes.</title>
        <authorList>
            <person name="Butler G."/>
            <person name="Rasmussen M.D."/>
            <person name="Lin M.F."/>
            <person name="Santos M.A.S."/>
            <person name="Sakthikumar S."/>
            <person name="Munro C.A."/>
            <person name="Rheinbay E."/>
            <person name="Grabherr M."/>
            <person name="Forche A."/>
            <person name="Reedy J.L."/>
            <person name="Agrafioti I."/>
            <person name="Arnaud M.B."/>
            <person name="Bates S."/>
            <person name="Brown A.J.P."/>
            <person name="Brunke S."/>
            <person name="Costanzo M.C."/>
            <person name="Fitzpatrick D.A."/>
            <person name="de Groot P.W.J."/>
            <person name="Harris D."/>
            <person name="Hoyer L.L."/>
            <person name="Hube B."/>
            <person name="Klis F.M."/>
            <person name="Kodira C."/>
            <person name="Lennard N."/>
            <person name="Logue M.E."/>
            <person name="Martin R."/>
            <person name="Neiman A.M."/>
            <person name="Nikolaou E."/>
            <person name="Quail M.A."/>
            <person name="Quinn J."/>
            <person name="Santos M.C."/>
            <person name="Schmitzberger F.F."/>
            <person name="Sherlock G."/>
            <person name="Shah P."/>
            <person name="Silverstein K.A.T."/>
            <person name="Skrzypek M.S."/>
            <person name="Soll D."/>
            <person name="Staggs R."/>
            <person name="Stansfield I."/>
            <person name="Stumpf M.P.H."/>
            <person name="Sudbery P.E."/>
            <person name="Srikantha T."/>
            <person name="Zeng Q."/>
            <person name="Berman J."/>
            <person name="Berriman M."/>
            <person name="Heitman J."/>
            <person name="Gow N.A.R."/>
            <person name="Lorenz M.C."/>
            <person name="Birren B.W."/>
            <person name="Kellis M."/>
            <person name="Cuomo C.A."/>
        </authorList>
    </citation>
    <scope>NUCLEOTIDE SEQUENCE [LARGE SCALE GENOMIC DNA]</scope>
    <source>
        <strain>ATCC MYA-3404 / T1</strain>
    </source>
</reference>
<keyword id="KW-0496">Mitochondrion</keyword>
<keyword id="KW-1185">Reference proteome</keyword>
<keyword id="KW-0809">Transit peptide</keyword>
<feature type="transit peptide" description="Mitochondrion" evidence="2">
    <location>
        <begin position="1"/>
        <end position="29"/>
    </location>
</feature>
<feature type="chain" id="PRO_0000399574" description="Altered inheritance of mitochondria protein 24, mitochondrial">
    <location>
        <begin position="30"/>
        <end position="447"/>
    </location>
</feature>
<protein>
    <recommendedName>
        <fullName>Altered inheritance of mitochondria protein 24, mitochondrial</fullName>
    </recommendedName>
</protein>
<accession>C5M9N0</accession>
<gene>
    <name type="primary">AIM24</name>
    <name type="ORF">CTRG_02192</name>
</gene>
<organism>
    <name type="scientific">Candida tropicalis (strain ATCC MYA-3404 / T1)</name>
    <name type="common">Yeast</name>
    <dbReference type="NCBI Taxonomy" id="294747"/>
    <lineage>
        <taxon>Eukaryota</taxon>
        <taxon>Fungi</taxon>
        <taxon>Dikarya</taxon>
        <taxon>Ascomycota</taxon>
        <taxon>Saccharomycotina</taxon>
        <taxon>Pichiomycetes</taxon>
        <taxon>Debaryomycetaceae</taxon>
        <taxon>Candida/Lodderomyces clade</taxon>
        <taxon>Candida</taxon>
    </lineage>
</organism>
<comment type="subcellular location">
    <subcellularLocation>
        <location evidence="1">Mitochondrion</location>
    </subcellularLocation>
</comment>
<comment type="similarity">
    <text evidence="3">Belongs to the AIM24 family.</text>
</comment>
<dbReference type="EMBL" id="GG692397">
    <property type="protein sequence ID" value="EER33374.1"/>
    <property type="molecule type" value="Genomic_DNA"/>
</dbReference>
<dbReference type="RefSeq" id="XP_002547895.1">
    <property type="nucleotide sequence ID" value="XM_002547849.1"/>
</dbReference>
<dbReference type="EnsemblFungi" id="CTRG_02192-t43_1">
    <property type="protein sequence ID" value="CTRG_02192-t43_1-p1"/>
    <property type="gene ID" value="CTRG_02192"/>
</dbReference>
<dbReference type="GeneID" id="8296327"/>
<dbReference type="KEGG" id="ctp:CTRG_02192"/>
<dbReference type="VEuPathDB" id="FungiDB:CTRG_02192"/>
<dbReference type="eggNOG" id="ENOG502RXC5">
    <property type="taxonomic scope" value="Eukaryota"/>
</dbReference>
<dbReference type="HOGENOM" id="CLU_040665_0_0_1"/>
<dbReference type="OrthoDB" id="5295771at2759"/>
<dbReference type="Proteomes" id="UP000002037">
    <property type="component" value="Unassembled WGS sequence"/>
</dbReference>
<dbReference type="GO" id="GO:0005743">
    <property type="term" value="C:mitochondrial inner membrane"/>
    <property type="evidence" value="ECO:0007669"/>
    <property type="project" value="TreeGrafter"/>
</dbReference>
<dbReference type="GO" id="GO:0007007">
    <property type="term" value="P:inner mitochondrial membrane organization"/>
    <property type="evidence" value="ECO:0007669"/>
    <property type="project" value="TreeGrafter"/>
</dbReference>
<dbReference type="Gene3D" id="3.60.160.10">
    <property type="entry name" value="Mitochondrial biogenesis AIM24"/>
    <property type="match status" value="1"/>
</dbReference>
<dbReference type="InterPro" id="IPR002838">
    <property type="entry name" value="AIM24"/>
</dbReference>
<dbReference type="InterPro" id="IPR036983">
    <property type="entry name" value="AIM24_sf"/>
</dbReference>
<dbReference type="PANTHER" id="PTHR36959">
    <property type="entry name" value="ALTERED INHERITANCE OF MITOCHONDRIA PROTEIN 24, MITOCHONDRIAL"/>
    <property type="match status" value="1"/>
</dbReference>
<dbReference type="PANTHER" id="PTHR36959:SF2">
    <property type="entry name" value="ALTERED INHERITANCE OF MITOCHONDRIA PROTEIN 24, MITOCHONDRIAL"/>
    <property type="match status" value="1"/>
</dbReference>
<dbReference type="Pfam" id="PF01987">
    <property type="entry name" value="AIM24"/>
    <property type="match status" value="1"/>
</dbReference>